<feature type="chain" id="PRO_0000137546" description="Inorganic pyrophosphatase">
    <location>
        <begin position="1"/>
        <end position="175"/>
    </location>
</feature>
<feature type="binding site" evidence="1">
    <location>
        <position position="30"/>
    </location>
    <ligand>
        <name>substrate</name>
    </ligand>
</feature>
<feature type="binding site" evidence="1">
    <location>
        <position position="44"/>
    </location>
    <ligand>
        <name>substrate</name>
    </ligand>
</feature>
<feature type="binding site" evidence="1">
    <location>
        <position position="56"/>
    </location>
    <ligand>
        <name>substrate</name>
    </ligand>
</feature>
<feature type="binding site" evidence="1">
    <location>
        <position position="66"/>
    </location>
    <ligand>
        <name>Mg(2+)</name>
        <dbReference type="ChEBI" id="CHEBI:18420"/>
        <label>1</label>
    </ligand>
</feature>
<feature type="binding site" evidence="1">
    <location>
        <position position="71"/>
    </location>
    <ligand>
        <name>Mg(2+)</name>
        <dbReference type="ChEBI" id="CHEBI:18420"/>
        <label>1</label>
    </ligand>
</feature>
<feature type="binding site" evidence="1">
    <location>
        <position position="71"/>
    </location>
    <ligand>
        <name>Mg(2+)</name>
        <dbReference type="ChEBI" id="CHEBI:18420"/>
        <label>2</label>
    </ligand>
</feature>
<feature type="binding site" evidence="1">
    <location>
        <position position="103"/>
    </location>
    <ligand>
        <name>Mg(2+)</name>
        <dbReference type="ChEBI" id="CHEBI:18420"/>
        <label>1</label>
    </ligand>
</feature>
<feature type="binding site" evidence="1">
    <location>
        <position position="142"/>
    </location>
    <ligand>
        <name>substrate</name>
    </ligand>
</feature>
<comment type="function">
    <text evidence="1">Catalyzes the hydrolysis of inorganic pyrophosphate (PPi) forming two phosphate ions.</text>
</comment>
<comment type="catalytic activity">
    <reaction evidence="1">
        <text>diphosphate + H2O = 2 phosphate + H(+)</text>
        <dbReference type="Rhea" id="RHEA:24576"/>
        <dbReference type="ChEBI" id="CHEBI:15377"/>
        <dbReference type="ChEBI" id="CHEBI:15378"/>
        <dbReference type="ChEBI" id="CHEBI:33019"/>
        <dbReference type="ChEBI" id="CHEBI:43474"/>
        <dbReference type="EC" id="3.6.1.1"/>
    </reaction>
</comment>
<comment type="cofactor">
    <cofactor evidence="1">
        <name>Mg(2+)</name>
        <dbReference type="ChEBI" id="CHEBI:18420"/>
    </cofactor>
</comment>
<comment type="subunit">
    <text evidence="1">Homohexamer.</text>
</comment>
<comment type="subcellular location">
    <subcellularLocation>
        <location evidence="1">Cytoplasm</location>
    </subcellularLocation>
</comment>
<comment type="similarity">
    <text evidence="1">Belongs to the PPase family.</text>
</comment>
<protein>
    <recommendedName>
        <fullName evidence="1">Inorganic pyrophosphatase</fullName>
        <ecNumber evidence="1">3.6.1.1</ecNumber>
    </recommendedName>
    <alternativeName>
        <fullName evidence="1">Pyrophosphate phospho-hydrolase</fullName>
        <shortName evidence="1">PPase</shortName>
    </alternativeName>
</protein>
<gene>
    <name evidence="1" type="primary">ppa</name>
    <name type="ordered locus">YPO3521</name>
    <name type="ordered locus">y0663</name>
    <name type="ordered locus">YP_0562</name>
</gene>
<proteinExistence type="inferred from homology"/>
<keyword id="KW-0963">Cytoplasm</keyword>
<keyword id="KW-0378">Hydrolase</keyword>
<keyword id="KW-0460">Magnesium</keyword>
<keyword id="KW-0479">Metal-binding</keyword>
<keyword id="KW-1185">Reference proteome</keyword>
<name>IPYR_YERPE</name>
<accession>Q8ZB98</accession>
<accession>Q0WBC8</accession>
<dbReference type="EC" id="3.6.1.1" evidence="1"/>
<dbReference type="EMBL" id="AL590842">
    <property type="protein sequence ID" value="CAL22109.1"/>
    <property type="molecule type" value="Genomic_DNA"/>
</dbReference>
<dbReference type="EMBL" id="AE009952">
    <property type="protein sequence ID" value="AAM84251.1"/>
    <property type="molecule type" value="Genomic_DNA"/>
</dbReference>
<dbReference type="EMBL" id="AE017042">
    <property type="protein sequence ID" value="AAS60832.1"/>
    <property type="molecule type" value="Genomic_DNA"/>
</dbReference>
<dbReference type="PIR" id="AB0428">
    <property type="entry name" value="AB0428"/>
</dbReference>
<dbReference type="RefSeq" id="WP_002210169.1">
    <property type="nucleotide sequence ID" value="NZ_WUCM01000036.1"/>
</dbReference>
<dbReference type="RefSeq" id="YP_002348410.1">
    <property type="nucleotide sequence ID" value="NC_003143.1"/>
</dbReference>
<dbReference type="SMR" id="Q8ZB98"/>
<dbReference type="STRING" id="214092.YPO3521"/>
<dbReference type="PaxDb" id="214092-YPO3521"/>
<dbReference type="DNASU" id="1145610"/>
<dbReference type="EnsemblBacteria" id="AAS60832">
    <property type="protein sequence ID" value="AAS60832"/>
    <property type="gene ID" value="YP_0562"/>
</dbReference>
<dbReference type="GeneID" id="96663957"/>
<dbReference type="KEGG" id="ype:YPO3521"/>
<dbReference type="KEGG" id="ypk:y0663"/>
<dbReference type="KEGG" id="ypm:YP_0562"/>
<dbReference type="PATRIC" id="fig|214092.21.peg.4016"/>
<dbReference type="eggNOG" id="COG0221">
    <property type="taxonomic scope" value="Bacteria"/>
</dbReference>
<dbReference type="HOGENOM" id="CLU_073198_1_0_6"/>
<dbReference type="OMA" id="IHHVSEF"/>
<dbReference type="OrthoDB" id="5187599at2"/>
<dbReference type="Proteomes" id="UP000000815">
    <property type="component" value="Chromosome"/>
</dbReference>
<dbReference type="Proteomes" id="UP000001019">
    <property type="component" value="Chromosome"/>
</dbReference>
<dbReference type="Proteomes" id="UP000002490">
    <property type="component" value="Chromosome"/>
</dbReference>
<dbReference type="GO" id="GO:0005829">
    <property type="term" value="C:cytosol"/>
    <property type="evidence" value="ECO:0000318"/>
    <property type="project" value="GO_Central"/>
</dbReference>
<dbReference type="GO" id="GO:0004427">
    <property type="term" value="F:inorganic diphosphate phosphatase activity"/>
    <property type="evidence" value="ECO:0000318"/>
    <property type="project" value="GO_Central"/>
</dbReference>
<dbReference type="GO" id="GO:0000287">
    <property type="term" value="F:magnesium ion binding"/>
    <property type="evidence" value="ECO:0000318"/>
    <property type="project" value="GO_Central"/>
</dbReference>
<dbReference type="GO" id="GO:0006796">
    <property type="term" value="P:phosphate-containing compound metabolic process"/>
    <property type="evidence" value="ECO:0000318"/>
    <property type="project" value="GO_Central"/>
</dbReference>
<dbReference type="CDD" id="cd00412">
    <property type="entry name" value="pyrophosphatase"/>
    <property type="match status" value="1"/>
</dbReference>
<dbReference type="FunFam" id="3.90.80.10:FF:000001">
    <property type="entry name" value="Inorganic pyrophosphatase"/>
    <property type="match status" value="1"/>
</dbReference>
<dbReference type="Gene3D" id="3.90.80.10">
    <property type="entry name" value="Inorganic pyrophosphatase"/>
    <property type="match status" value="1"/>
</dbReference>
<dbReference type="HAMAP" id="MF_00209">
    <property type="entry name" value="Inorganic_PPase"/>
    <property type="match status" value="1"/>
</dbReference>
<dbReference type="InterPro" id="IPR008162">
    <property type="entry name" value="Pyrophosphatase"/>
</dbReference>
<dbReference type="InterPro" id="IPR036649">
    <property type="entry name" value="Pyrophosphatase_sf"/>
</dbReference>
<dbReference type="NCBIfam" id="NF002317">
    <property type="entry name" value="PRK01250.1"/>
    <property type="match status" value="1"/>
</dbReference>
<dbReference type="PANTHER" id="PTHR10286">
    <property type="entry name" value="INORGANIC PYROPHOSPHATASE"/>
    <property type="match status" value="1"/>
</dbReference>
<dbReference type="Pfam" id="PF00719">
    <property type="entry name" value="Pyrophosphatase"/>
    <property type="match status" value="1"/>
</dbReference>
<dbReference type="SUPFAM" id="SSF50324">
    <property type="entry name" value="Inorganic pyrophosphatase"/>
    <property type="match status" value="1"/>
</dbReference>
<dbReference type="PROSITE" id="PS00387">
    <property type="entry name" value="PPASE"/>
    <property type="match status" value="1"/>
</dbReference>
<organism>
    <name type="scientific">Yersinia pestis</name>
    <dbReference type="NCBI Taxonomy" id="632"/>
    <lineage>
        <taxon>Bacteria</taxon>
        <taxon>Pseudomonadati</taxon>
        <taxon>Pseudomonadota</taxon>
        <taxon>Gammaproteobacteria</taxon>
        <taxon>Enterobacterales</taxon>
        <taxon>Yersiniaceae</taxon>
        <taxon>Yersinia</taxon>
    </lineage>
</organism>
<reference key="1">
    <citation type="journal article" date="2001" name="Nature">
        <title>Genome sequence of Yersinia pestis, the causative agent of plague.</title>
        <authorList>
            <person name="Parkhill J."/>
            <person name="Wren B.W."/>
            <person name="Thomson N.R."/>
            <person name="Titball R.W."/>
            <person name="Holden M.T.G."/>
            <person name="Prentice M.B."/>
            <person name="Sebaihia M."/>
            <person name="James K.D."/>
            <person name="Churcher C.M."/>
            <person name="Mungall K.L."/>
            <person name="Baker S."/>
            <person name="Basham D."/>
            <person name="Bentley S.D."/>
            <person name="Brooks K."/>
            <person name="Cerdeno-Tarraga A.-M."/>
            <person name="Chillingworth T."/>
            <person name="Cronin A."/>
            <person name="Davies R.M."/>
            <person name="Davis P."/>
            <person name="Dougan G."/>
            <person name="Feltwell T."/>
            <person name="Hamlin N."/>
            <person name="Holroyd S."/>
            <person name="Jagels K."/>
            <person name="Karlyshev A.V."/>
            <person name="Leather S."/>
            <person name="Moule S."/>
            <person name="Oyston P.C.F."/>
            <person name="Quail M.A."/>
            <person name="Rutherford K.M."/>
            <person name="Simmonds M."/>
            <person name="Skelton J."/>
            <person name="Stevens K."/>
            <person name="Whitehead S."/>
            <person name="Barrell B.G."/>
        </authorList>
    </citation>
    <scope>NUCLEOTIDE SEQUENCE [LARGE SCALE GENOMIC DNA]</scope>
    <source>
        <strain>CO-92 / Biovar Orientalis</strain>
    </source>
</reference>
<reference key="2">
    <citation type="journal article" date="2002" name="J. Bacteriol.">
        <title>Genome sequence of Yersinia pestis KIM.</title>
        <authorList>
            <person name="Deng W."/>
            <person name="Burland V."/>
            <person name="Plunkett G. III"/>
            <person name="Boutin A."/>
            <person name="Mayhew G.F."/>
            <person name="Liss P."/>
            <person name="Perna N.T."/>
            <person name="Rose D.J."/>
            <person name="Mau B."/>
            <person name="Zhou S."/>
            <person name="Schwartz D.C."/>
            <person name="Fetherston J.D."/>
            <person name="Lindler L.E."/>
            <person name="Brubaker R.R."/>
            <person name="Plano G.V."/>
            <person name="Straley S.C."/>
            <person name="McDonough K.A."/>
            <person name="Nilles M.L."/>
            <person name="Matson J.S."/>
            <person name="Blattner F.R."/>
            <person name="Perry R.D."/>
        </authorList>
    </citation>
    <scope>NUCLEOTIDE SEQUENCE [LARGE SCALE GENOMIC DNA]</scope>
    <source>
        <strain>KIM10+ / Biovar Mediaevalis</strain>
    </source>
</reference>
<reference key="3">
    <citation type="journal article" date="2004" name="DNA Res.">
        <title>Complete genome sequence of Yersinia pestis strain 91001, an isolate avirulent to humans.</title>
        <authorList>
            <person name="Song Y."/>
            <person name="Tong Z."/>
            <person name="Wang J."/>
            <person name="Wang L."/>
            <person name="Guo Z."/>
            <person name="Han Y."/>
            <person name="Zhang J."/>
            <person name="Pei D."/>
            <person name="Zhou D."/>
            <person name="Qin H."/>
            <person name="Pang X."/>
            <person name="Han Y."/>
            <person name="Zhai J."/>
            <person name="Li M."/>
            <person name="Cui B."/>
            <person name="Qi Z."/>
            <person name="Jin L."/>
            <person name="Dai R."/>
            <person name="Chen F."/>
            <person name="Li S."/>
            <person name="Ye C."/>
            <person name="Du Z."/>
            <person name="Lin W."/>
            <person name="Wang J."/>
            <person name="Yu J."/>
            <person name="Yang H."/>
            <person name="Wang J."/>
            <person name="Huang P."/>
            <person name="Yang R."/>
        </authorList>
    </citation>
    <scope>NUCLEOTIDE SEQUENCE [LARGE SCALE GENOMIC DNA]</scope>
    <source>
        <strain>91001 / Biovar Mediaevalis</strain>
    </source>
</reference>
<evidence type="ECO:0000255" key="1">
    <source>
        <dbReference type="HAMAP-Rule" id="MF_00209"/>
    </source>
</evidence>
<sequence length="175" mass="19614">MSLNQVPAGKDLPEDIYVVIEIPANADPIKYEIDKETGSLFVDRFMSTAMFYPCNYGYINNTLSLDGDPVDVLVPTPYPLQPGSVIRCRPVGVLKMTDEAGEDAKLVAVPHSKLTKEYDHVKDVQDLPELLKAQIKHFFEHYKDLETGKWVKVDGWEDAAAAKAEILSSFERAKK</sequence>